<proteinExistence type="inferred from homology"/>
<accession>B6JJT0</accession>
<accession>F8BWU2</accession>
<reference key="1">
    <citation type="journal article" date="2008" name="J. Bacteriol.">
        <title>Genome sequence of the chemolithoautotrophic bacterium Oligotropha carboxidovorans OM5T.</title>
        <authorList>
            <person name="Paul D."/>
            <person name="Bridges S."/>
            <person name="Burgess S.C."/>
            <person name="Dandass Y."/>
            <person name="Lawrence M.L."/>
        </authorList>
    </citation>
    <scope>NUCLEOTIDE SEQUENCE [LARGE SCALE GENOMIC DNA]</scope>
    <source>
        <strain>ATCC 49405 / DSM 1227 / KCTC 32145 / OM5</strain>
    </source>
</reference>
<reference key="2">
    <citation type="journal article" date="2011" name="J. Bacteriol.">
        <title>Complete genome sequences of the chemolithoautotrophic Oligotropha carboxidovorans strains OM4 and OM5.</title>
        <authorList>
            <person name="Volland S."/>
            <person name="Rachinger M."/>
            <person name="Strittmatter A."/>
            <person name="Daniel R."/>
            <person name="Gottschalk G."/>
            <person name="Meyer O."/>
        </authorList>
    </citation>
    <scope>NUCLEOTIDE SEQUENCE [LARGE SCALE GENOMIC DNA]</scope>
    <source>
        <strain>ATCC 49405 / DSM 1227 / KCTC 32145 / OM5</strain>
    </source>
</reference>
<protein>
    <recommendedName>
        <fullName evidence="1">Phosphoenolpyruvate carboxykinase (ATP)</fullName>
        <shortName evidence="1">PCK</shortName>
        <shortName evidence="1">PEP carboxykinase</shortName>
        <shortName evidence="1">PEPCK</shortName>
        <ecNumber evidence="1">4.1.1.49</ecNumber>
    </recommendedName>
</protein>
<gene>
    <name evidence="1" type="primary">pckA</name>
    <name type="ordered locus">OCAR_7573</name>
    <name type="ordered locus">OCA5_c05700</name>
</gene>
<evidence type="ECO:0000255" key="1">
    <source>
        <dbReference type="HAMAP-Rule" id="MF_00453"/>
    </source>
</evidence>
<dbReference type="EC" id="4.1.1.49" evidence="1"/>
<dbReference type="EMBL" id="CP001196">
    <property type="protein sequence ID" value="ACI94674.1"/>
    <property type="molecule type" value="Genomic_DNA"/>
</dbReference>
<dbReference type="EMBL" id="CP002826">
    <property type="protein sequence ID" value="AEI05294.1"/>
    <property type="molecule type" value="Genomic_DNA"/>
</dbReference>
<dbReference type="RefSeq" id="WP_012564698.1">
    <property type="nucleotide sequence ID" value="NC_015684.1"/>
</dbReference>
<dbReference type="SMR" id="B6JJT0"/>
<dbReference type="STRING" id="504832.OCA5_c05700"/>
<dbReference type="KEGG" id="oca:OCAR_7573"/>
<dbReference type="KEGG" id="ocg:OCA5_c05700"/>
<dbReference type="PATRIC" id="fig|504832.7.peg.596"/>
<dbReference type="eggNOG" id="COG1866">
    <property type="taxonomic scope" value="Bacteria"/>
</dbReference>
<dbReference type="HOGENOM" id="CLU_018247_0_1_5"/>
<dbReference type="OrthoDB" id="9806325at2"/>
<dbReference type="UniPathway" id="UPA00138"/>
<dbReference type="Proteomes" id="UP000007730">
    <property type="component" value="Chromosome"/>
</dbReference>
<dbReference type="GO" id="GO:0005829">
    <property type="term" value="C:cytosol"/>
    <property type="evidence" value="ECO:0007669"/>
    <property type="project" value="TreeGrafter"/>
</dbReference>
<dbReference type="GO" id="GO:0005524">
    <property type="term" value="F:ATP binding"/>
    <property type="evidence" value="ECO:0007669"/>
    <property type="project" value="UniProtKB-UniRule"/>
</dbReference>
<dbReference type="GO" id="GO:0046872">
    <property type="term" value="F:metal ion binding"/>
    <property type="evidence" value="ECO:0007669"/>
    <property type="project" value="UniProtKB-KW"/>
</dbReference>
<dbReference type="GO" id="GO:0004612">
    <property type="term" value="F:phosphoenolpyruvate carboxykinase (ATP) activity"/>
    <property type="evidence" value="ECO:0007669"/>
    <property type="project" value="UniProtKB-UniRule"/>
</dbReference>
<dbReference type="GO" id="GO:0006094">
    <property type="term" value="P:gluconeogenesis"/>
    <property type="evidence" value="ECO:0007669"/>
    <property type="project" value="UniProtKB-UniRule"/>
</dbReference>
<dbReference type="CDD" id="cd00484">
    <property type="entry name" value="PEPCK_ATP"/>
    <property type="match status" value="1"/>
</dbReference>
<dbReference type="Gene3D" id="3.90.228.20">
    <property type="match status" value="1"/>
</dbReference>
<dbReference type="Gene3D" id="3.40.449.10">
    <property type="entry name" value="Phosphoenolpyruvate Carboxykinase, domain 1"/>
    <property type="match status" value="1"/>
</dbReference>
<dbReference type="Gene3D" id="2.170.8.10">
    <property type="entry name" value="Phosphoenolpyruvate Carboxykinase, domain 2"/>
    <property type="match status" value="1"/>
</dbReference>
<dbReference type="HAMAP" id="MF_00453">
    <property type="entry name" value="PEPCK_ATP"/>
    <property type="match status" value="1"/>
</dbReference>
<dbReference type="InterPro" id="IPR001272">
    <property type="entry name" value="PEP_carboxykinase_ATP"/>
</dbReference>
<dbReference type="InterPro" id="IPR013035">
    <property type="entry name" value="PEP_carboxykinase_C"/>
</dbReference>
<dbReference type="InterPro" id="IPR008210">
    <property type="entry name" value="PEP_carboxykinase_N"/>
</dbReference>
<dbReference type="NCBIfam" id="TIGR00224">
    <property type="entry name" value="pckA"/>
    <property type="match status" value="1"/>
</dbReference>
<dbReference type="NCBIfam" id="NF006820">
    <property type="entry name" value="PRK09344.1-2"/>
    <property type="match status" value="1"/>
</dbReference>
<dbReference type="NCBIfam" id="NF006821">
    <property type="entry name" value="PRK09344.1-3"/>
    <property type="match status" value="1"/>
</dbReference>
<dbReference type="NCBIfam" id="NF006822">
    <property type="entry name" value="PRK09344.1-4"/>
    <property type="match status" value="1"/>
</dbReference>
<dbReference type="PANTHER" id="PTHR30031:SF0">
    <property type="entry name" value="PHOSPHOENOLPYRUVATE CARBOXYKINASE (ATP)"/>
    <property type="match status" value="1"/>
</dbReference>
<dbReference type="PANTHER" id="PTHR30031">
    <property type="entry name" value="PHOSPHOENOLPYRUVATE CARBOXYKINASE ATP"/>
    <property type="match status" value="1"/>
</dbReference>
<dbReference type="Pfam" id="PF01293">
    <property type="entry name" value="PEPCK_ATP"/>
    <property type="match status" value="1"/>
</dbReference>
<dbReference type="PIRSF" id="PIRSF006294">
    <property type="entry name" value="PEP_crbxkin"/>
    <property type="match status" value="1"/>
</dbReference>
<dbReference type="SUPFAM" id="SSF68923">
    <property type="entry name" value="PEP carboxykinase N-terminal domain"/>
    <property type="match status" value="1"/>
</dbReference>
<dbReference type="SUPFAM" id="SSF53795">
    <property type="entry name" value="PEP carboxykinase-like"/>
    <property type="match status" value="1"/>
</dbReference>
<name>PCKA_AFIC5</name>
<organism>
    <name type="scientific">Afipia carboxidovorans (strain ATCC 49405 / DSM 1227 / KCTC 32145 / OM5)</name>
    <name type="common">Oligotropha carboxidovorans</name>
    <dbReference type="NCBI Taxonomy" id="504832"/>
    <lineage>
        <taxon>Bacteria</taxon>
        <taxon>Pseudomonadati</taxon>
        <taxon>Pseudomonadota</taxon>
        <taxon>Alphaproteobacteria</taxon>
        <taxon>Hyphomicrobiales</taxon>
        <taxon>Nitrobacteraceae</taxon>
        <taxon>Afipia</taxon>
    </lineage>
</organism>
<keyword id="KW-0067">ATP-binding</keyword>
<keyword id="KW-0963">Cytoplasm</keyword>
<keyword id="KW-0210">Decarboxylase</keyword>
<keyword id="KW-0312">Gluconeogenesis</keyword>
<keyword id="KW-0456">Lyase</keyword>
<keyword id="KW-0464">Manganese</keyword>
<keyword id="KW-0479">Metal-binding</keyword>
<keyword id="KW-0547">Nucleotide-binding</keyword>
<keyword id="KW-1185">Reference proteome</keyword>
<sequence>MDQSGVRNDAFGVDKFGLKNLKAVHWNLGTAALYEYALRNGEAELTREGALCAETGEFTGRSPKDKYTVRDALTDKTMSWSTNQSITPEQFAVLHADFIKHAEGMTLYAQDLCGGADPKFQIKTRVYTELAWHSLFIRTMLRRPETAALADFVPELTIIDLPSFRADPARHGVRSPTVVAIDFTRKIVLIGGTHYAGEMKKSVFTTLNFYLPEQGVLPMHCSANVGAKGDAAVFFGLSGTGKTTLSADPQRTLLGDDEHGWGPDGVFNFEGGCYAKTIRLSREAEPAIYDASLRFGAVLENVVVDSQTRAVDFDDGSKTENTRSAYPLDAIPNASPTGCAGQPKNIVMLAADAFGVLPPIAKLTPSQAMYHFLSGYTAKVAGTERGLGSEPQPEFSACFGAPFLPRDPTVYGEMLRKLIAKHNVDCWLVNTGWTGGKFGIGNRMPIKVTRALLTAALDGSLRNVTFRTDPYFGFAVPTALPGVPSDILDPINTWADKADFKKTAQALVSMFRQNFTKFEKLVDADVLAAAPDARQAAE</sequence>
<comment type="function">
    <text evidence="1">Involved in the gluconeogenesis. Catalyzes the conversion of oxaloacetate (OAA) to phosphoenolpyruvate (PEP) through direct phosphoryl transfer between the nucleoside triphosphate and OAA.</text>
</comment>
<comment type="catalytic activity">
    <reaction evidence="1">
        <text>oxaloacetate + ATP = phosphoenolpyruvate + ADP + CO2</text>
        <dbReference type="Rhea" id="RHEA:18617"/>
        <dbReference type="ChEBI" id="CHEBI:16452"/>
        <dbReference type="ChEBI" id="CHEBI:16526"/>
        <dbReference type="ChEBI" id="CHEBI:30616"/>
        <dbReference type="ChEBI" id="CHEBI:58702"/>
        <dbReference type="ChEBI" id="CHEBI:456216"/>
        <dbReference type="EC" id="4.1.1.49"/>
    </reaction>
</comment>
<comment type="cofactor">
    <cofactor evidence="1">
        <name>Mn(2+)</name>
        <dbReference type="ChEBI" id="CHEBI:29035"/>
    </cofactor>
    <text evidence="1">Binds 1 Mn(2+) ion per subunit.</text>
</comment>
<comment type="pathway">
    <text evidence="1">Carbohydrate biosynthesis; gluconeogenesis.</text>
</comment>
<comment type="subcellular location">
    <subcellularLocation>
        <location evidence="1">Cytoplasm</location>
    </subcellularLocation>
</comment>
<comment type="similarity">
    <text evidence="1">Belongs to the phosphoenolpyruvate carboxykinase (ATP) family.</text>
</comment>
<feature type="chain" id="PRO_1000125077" description="Phosphoenolpyruvate carboxykinase (ATP)">
    <location>
        <begin position="1"/>
        <end position="538"/>
    </location>
</feature>
<feature type="binding site" evidence="1">
    <location>
        <position position="61"/>
    </location>
    <ligand>
        <name>substrate</name>
    </ligand>
</feature>
<feature type="binding site" evidence="1">
    <location>
        <position position="195"/>
    </location>
    <ligand>
        <name>substrate</name>
    </ligand>
</feature>
<feature type="binding site" evidence="1">
    <location>
        <position position="201"/>
    </location>
    <ligand>
        <name>ATP</name>
        <dbReference type="ChEBI" id="CHEBI:30616"/>
    </ligand>
</feature>
<feature type="binding site" evidence="1">
    <location>
        <position position="201"/>
    </location>
    <ligand>
        <name>Mn(2+)</name>
        <dbReference type="ChEBI" id="CHEBI:29035"/>
    </ligand>
</feature>
<feature type="binding site" evidence="1">
    <location>
        <position position="201"/>
    </location>
    <ligand>
        <name>substrate</name>
    </ligand>
</feature>
<feature type="binding site" evidence="1">
    <location>
        <position position="220"/>
    </location>
    <ligand>
        <name>ATP</name>
        <dbReference type="ChEBI" id="CHEBI:30616"/>
    </ligand>
</feature>
<feature type="binding site" evidence="1">
    <location>
        <position position="220"/>
    </location>
    <ligand>
        <name>Mn(2+)</name>
        <dbReference type="ChEBI" id="CHEBI:29035"/>
    </ligand>
</feature>
<feature type="binding site" evidence="1">
    <location>
        <begin position="236"/>
        <end position="244"/>
    </location>
    <ligand>
        <name>ATP</name>
        <dbReference type="ChEBI" id="CHEBI:30616"/>
    </ligand>
</feature>
<feature type="binding site" evidence="1">
    <location>
        <position position="257"/>
    </location>
    <ligand>
        <name>Mn(2+)</name>
        <dbReference type="ChEBI" id="CHEBI:29035"/>
    </ligand>
</feature>
<feature type="binding site" evidence="1">
    <location>
        <position position="285"/>
    </location>
    <ligand>
        <name>ATP</name>
        <dbReference type="ChEBI" id="CHEBI:30616"/>
    </ligand>
</feature>
<feature type="binding site" evidence="1">
    <location>
        <position position="323"/>
    </location>
    <ligand>
        <name>ATP</name>
        <dbReference type="ChEBI" id="CHEBI:30616"/>
    </ligand>
</feature>
<feature type="binding site" evidence="1">
    <location>
        <position position="323"/>
    </location>
    <ligand>
        <name>substrate</name>
    </ligand>
</feature>
<feature type="binding site" evidence="1">
    <location>
        <position position="449"/>
    </location>
    <ligand>
        <name>ATP</name>
        <dbReference type="ChEBI" id="CHEBI:30616"/>
    </ligand>
</feature>